<reference key="1">
    <citation type="journal article" date="2009" name="Genome Res.">
        <title>Comparative genomic analyses of the human fungal pathogens Coccidioides and their relatives.</title>
        <authorList>
            <person name="Sharpton T.J."/>
            <person name="Stajich J.E."/>
            <person name="Rounsley S.D."/>
            <person name="Gardner M.J."/>
            <person name="Wortman J.R."/>
            <person name="Jordar V.S."/>
            <person name="Maiti R."/>
            <person name="Kodira C.D."/>
            <person name="Neafsey D.E."/>
            <person name="Zeng Q."/>
            <person name="Hung C.-Y."/>
            <person name="McMahan C."/>
            <person name="Muszewska A."/>
            <person name="Grynberg M."/>
            <person name="Mandel M.A."/>
            <person name="Kellner E.M."/>
            <person name="Barker B.M."/>
            <person name="Galgiani J.N."/>
            <person name="Orbach M.J."/>
            <person name="Kirkland T.N."/>
            <person name="Cole G.T."/>
            <person name="Henn M.R."/>
            <person name="Birren B.W."/>
            <person name="Taylor J.W."/>
        </authorList>
    </citation>
    <scope>NUCLEOTIDE SEQUENCE [LARGE SCALE GENOMIC DNA]</scope>
    <source>
        <strain>RS</strain>
    </source>
</reference>
<reference key="2">
    <citation type="journal article" date="2010" name="Genome Res.">
        <title>Population genomic sequencing of Coccidioides fungi reveals recent hybridization and transposon control.</title>
        <authorList>
            <person name="Neafsey D.E."/>
            <person name="Barker B.M."/>
            <person name="Sharpton T.J."/>
            <person name="Stajich J.E."/>
            <person name="Park D.J."/>
            <person name="Whiston E."/>
            <person name="Hung C.-Y."/>
            <person name="McMahan C."/>
            <person name="White J."/>
            <person name="Sykes S."/>
            <person name="Heiman D."/>
            <person name="Young S."/>
            <person name="Zeng Q."/>
            <person name="Abouelleil A."/>
            <person name="Aftuck L."/>
            <person name="Bessette D."/>
            <person name="Brown A."/>
            <person name="FitzGerald M."/>
            <person name="Lui A."/>
            <person name="Macdonald J.P."/>
            <person name="Priest M."/>
            <person name="Orbach M.J."/>
            <person name="Galgiani J.N."/>
            <person name="Kirkland T.N."/>
            <person name="Cole G.T."/>
            <person name="Birren B.W."/>
            <person name="Henn M.R."/>
            <person name="Taylor J.W."/>
            <person name="Rounsley S.D."/>
        </authorList>
    </citation>
    <scope>GENOME REANNOTATION</scope>
    <source>
        <strain>RS</strain>
    </source>
</reference>
<dbReference type="EC" id="3.5.3.1" evidence="2"/>
<dbReference type="EMBL" id="GG704916">
    <property type="protein sequence ID" value="EAS32659.3"/>
    <property type="molecule type" value="Genomic_DNA"/>
</dbReference>
<dbReference type="RefSeq" id="XP_001244242.1">
    <property type="nucleotide sequence ID" value="XM_001244241.2"/>
</dbReference>
<dbReference type="SMR" id="Q1E180"/>
<dbReference type="FunCoup" id="Q1E180">
    <property type="interactions" value="1289"/>
</dbReference>
<dbReference type="STRING" id="246410.Q1E180"/>
<dbReference type="GeneID" id="4563496"/>
<dbReference type="KEGG" id="cim:CIMG_03683"/>
<dbReference type="VEuPathDB" id="FungiDB:CIMG_03683"/>
<dbReference type="InParanoid" id="Q1E180"/>
<dbReference type="OMA" id="FSWMTPC"/>
<dbReference type="OrthoDB" id="9992747at2759"/>
<dbReference type="UniPathway" id="UPA00158">
    <property type="reaction ID" value="UER00270"/>
</dbReference>
<dbReference type="Proteomes" id="UP000001261">
    <property type="component" value="Unassembled WGS sequence"/>
</dbReference>
<dbReference type="GO" id="GO:0005829">
    <property type="term" value="C:cytosol"/>
    <property type="evidence" value="ECO:0007669"/>
    <property type="project" value="TreeGrafter"/>
</dbReference>
<dbReference type="GO" id="GO:0005634">
    <property type="term" value="C:nucleus"/>
    <property type="evidence" value="ECO:0007669"/>
    <property type="project" value="TreeGrafter"/>
</dbReference>
<dbReference type="GO" id="GO:0004053">
    <property type="term" value="F:arginase activity"/>
    <property type="evidence" value="ECO:0007669"/>
    <property type="project" value="UniProtKB-EC"/>
</dbReference>
<dbReference type="GO" id="GO:0030145">
    <property type="term" value="F:manganese ion binding"/>
    <property type="evidence" value="ECO:0007669"/>
    <property type="project" value="TreeGrafter"/>
</dbReference>
<dbReference type="GO" id="GO:0019547">
    <property type="term" value="P:arginine catabolic process to ornithine"/>
    <property type="evidence" value="ECO:0007669"/>
    <property type="project" value="TreeGrafter"/>
</dbReference>
<dbReference type="GO" id="GO:0000050">
    <property type="term" value="P:urea cycle"/>
    <property type="evidence" value="ECO:0007669"/>
    <property type="project" value="UniProtKB-UniPathway"/>
</dbReference>
<dbReference type="CDD" id="cd09989">
    <property type="entry name" value="Arginase"/>
    <property type="match status" value="1"/>
</dbReference>
<dbReference type="FunFam" id="3.40.800.10:FF:000012">
    <property type="entry name" value="Arginase"/>
    <property type="match status" value="1"/>
</dbReference>
<dbReference type="Gene3D" id="3.40.800.10">
    <property type="entry name" value="Ureohydrolase domain"/>
    <property type="match status" value="1"/>
</dbReference>
<dbReference type="InterPro" id="IPR014033">
    <property type="entry name" value="Arginase"/>
</dbReference>
<dbReference type="InterPro" id="IPR006035">
    <property type="entry name" value="Ureohydrolase"/>
</dbReference>
<dbReference type="InterPro" id="IPR023696">
    <property type="entry name" value="Ureohydrolase_dom_sf"/>
</dbReference>
<dbReference type="InterPro" id="IPR020855">
    <property type="entry name" value="Ureohydrolase_Mn_BS"/>
</dbReference>
<dbReference type="NCBIfam" id="TIGR01229">
    <property type="entry name" value="rocF_arginase"/>
    <property type="match status" value="1"/>
</dbReference>
<dbReference type="PANTHER" id="PTHR43782">
    <property type="entry name" value="ARGINASE"/>
    <property type="match status" value="1"/>
</dbReference>
<dbReference type="PANTHER" id="PTHR43782:SF3">
    <property type="entry name" value="ARGINASE"/>
    <property type="match status" value="1"/>
</dbReference>
<dbReference type="Pfam" id="PF00491">
    <property type="entry name" value="Arginase"/>
    <property type="match status" value="1"/>
</dbReference>
<dbReference type="PRINTS" id="PR00116">
    <property type="entry name" value="ARGINASE"/>
</dbReference>
<dbReference type="SUPFAM" id="SSF52768">
    <property type="entry name" value="Arginase/deacetylase"/>
    <property type="match status" value="1"/>
</dbReference>
<dbReference type="PROSITE" id="PS01053">
    <property type="entry name" value="ARGINASE_1"/>
    <property type="match status" value="1"/>
</dbReference>
<dbReference type="PROSITE" id="PS51409">
    <property type="entry name" value="ARGINASE_2"/>
    <property type="match status" value="1"/>
</dbReference>
<gene>
    <name type="primary">ARG</name>
    <name type="ORF">CIMG_03683</name>
</gene>
<proteinExistence type="inferred from homology"/>
<feature type="chain" id="PRO_0000252280" description="Arginase">
    <location>
        <begin position="1"/>
        <end position="322"/>
    </location>
</feature>
<feature type="binding site" evidence="4">
    <location>
        <position position="113"/>
    </location>
    <ligand>
        <name>Mn(2+)</name>
        <dbReference type="ChEBI" id="CHEBI:29035"/>
        <label>1</label>
    </ligand>
</feature>
<feature type="binding site" evidence="4">
    <location>
        <position position="141"/>
    </location>
    <ligand>
        <name>Mn(2+)</name>
        <dbReference type="ChEBI" id="CHEBI:29035"/>
        <label>1</label>
    </ligand>
</feature>
<feature type="binding site" evidence="4">
    <location>
        <position position="141"/>
    </location>
    <ligand>
        <name>Mn(2+)</name>
        <dbReference type="ChEBI" id="CHEBI:29035"/>
        <label>2</label>
    </ligand>
</feature>
<feature type="binding site" evidence="3">
    <location>
        <begin position="143"/>
        <end position="147"/>
    </location>
    <ligand>
        <name>substrate</name>
    </ligand>
</feature>
<feature type="binding site" evidence="4">
    <location>
        <position position="143"/>
    </location>
    <ligand>
        <name>Mn(2+)</name>
        <dbReference type="ChEBI" id="CHEBI:29035"/>
        <label>2</label>
    </ligand>
</feature>
<feature type="binding site" evidence="4">
    <location>
        <position position="145"/>
    </location>
    <ligand>
        <name>Mn(2+)</name>
        <dbReference type="ChEBI" id="CHEBI:29035"/>
        <label>1</label>
    </ligand>
</feature>
<feature type="binding site" evidence="3">
    <location>
        <begin position="154"/>
        <end position="156"/>
    </location>
    <ligand>
        <name>substrate</name>
    </ligand>
</feature>
<feature type="binding site" evidence="3">
    <location>
        <position position="200"/>
    </location>
    <ligand>
        <name>substrate</name>
    </ligand>
</feature>
<feature type="binding site" evidence="4">
    <location>
        <position position="247"/>
    </location>
    <ligand>
        <name>Mn(2+)</name>
        <dbReference type="ChEBI" id="CHEBI:29035"/>
        <label>1</label>
    </ligand>
</feature>
<feature type="binding site" evidence="4">
    <location>
        <position position="247"/>
    </location>
    <ligand>
        <name>Mn(2+)</name>
        <dbReference type="ChEBI" id="CHEBI:29035"/>
        <label>2</label>
    </ligand>
</feature>
<feature type="binding site" evidence="4">
    <location>
        <position position="249"/>
    </location>
    <ligand>
        <name>Mn(2+)</name>
        <dbReference type="ChEBI" id="CHEBI:29035"/>
        <label>2</label>
    </ligand>
</feature>
<feature type="binding site" evidence="3">
    <location>
        <position position="261"/>
    </location>
    <ligand>
        <name>substrate</name>
    </ligand>
</feature>
<feature type="binding site" evidence="3">
    <location>
        <position position="292"/>
    </location>
    <ligand>
        <name>substrate</name>
    </ligand>
</feature>
<evidence type="ECO:0000250" key="1"/>
<evidence type="ECO:0000250" key="2">
    <source>
        <dbReference type="UniProtKB" id="P05089"/>
    </source>
</evidence>
<evidence type="ECO:0000250" key="3">
    <source>
        <dbReference type="UniProtKB" id="P53608"/>
    </source>
</evidence>
<evidence type="ECO:0000255" key="4">
    <source>
        <dbReference type="PROSITE-ProRule" id="PRU00742"/>
    </source>
</evidence>
<name>ARGI_COCIM</name>
<accession>Q1E180</accession>
<accession>J3KC76</accession>
<protein>
    <recommendedName>
        <fullName>Arginase</fullName>
        <ecNumber evidence="2">3.5.3.1</ecNumber>
    </recommendedName>
</protein>
<organism>
    <name type="scientific">Coccidioides immitis (strain RS)</name>
    <name type="common">Valley fever fungus</name>
    <dbReference type="NCBI Taxonomy" id="246410"/>
    <lineage>
        <taxon>Eukaryota</taxon>
        <taxon>Fungi</taxon>
        <taxon>Dikarya</taxon>
        <taxon>Ascomycota</taxon>
        <taxon>Pezizomycotina</taxon>
        <taxon>Eurotiomycetes</taxon>
        <taxon>Eurotiomycetidae</taxon>
        <taxon>Onygenales</taxon>
        <taxon>Onygenaceae</taxon>
        <taxon>Coccidioides</taxon>
    </lineage>
</organism>
<keyword id="KW-0056">Arginine metabolism</keyword>
<keyword id="KW-0378">Hydrolase</keyword>
<keyword id="KW-0464">Manganese</keyword>
<keyword id="KW-0479">Metal-binding</keyword>
<keyword id="KW-1185">Reference proteome</keyword>
<sequence length="322" mass="35114">MTSPSTIKQKFIAKGHQLGVVAVGFSDGQPNQGVDPSGLIEAGLLDQLRDDLEYDIRHDGKVHTYAEFVPEHDPNHRGMKKPRTVSAATQQLSRQVYEHAREGRLVLTLGGDHSIAIGTISGTAKAIRERLGREMAVIWVDAHADINRPEDSDSGNIHGMPLAFLTGLAKDDNEDMFGWLQPDNLISPRKLVYIGLRDVDRAEKRLLKEHGIKAFSMHDIDKYGIGRVVEMALAHIGQDTPIHLSFDVDALDPQWAPSTGTPVRGGLTLREGDFIAESIHETGSLVAMDLVEVNPTLETLGASETIRAGCSLVRSALGDTLL</sequence>
<comment type="catalytic activity">
    <reaction evidence="2">
        <text>L-arginine + H2O = urea + L-ornithine</text>
        <dbReference type="Rhea" id="RHEA:20569"/>
        <dbReference type="ChEBI" id="CHEBI:15377"/>
        <dbReference type="ChEBI" id="CHEBI:16199"/>
        <dbReference type="ChEBI" id="CHEBI:32682"/>
        <dbReference type="ChEBI" id="CHEBI:46911"/>
        <dbReference type="EC" id="3.5.3.1"/>
    </reaction>
</comment>
<comment type="cofactor">
    <cofactor evidence="4">
        <name>Mn(2+)</name>
        <dbReference type="ChEBI" id="CHEBI:29035"/>
    </cofactor>
    <text evidence="4">Binds 2 manganese ions per subunit.</text>
</comment>
<comment type="pathway">
    <text evidence="2">Nitrogen metabolism; urea cycle; L-ornithine and urea from L-arginine: step 1/1.</text>
</comment>
<comment type="subunit">
    <text evidence="1">Homotrimer.</text>
</comment>
<comment type="similarity">
    <text evidence="4">Belongs to the arginase family.</text>
</comment>